<name>PSRP_PARPJ</name>
<dbReference type="EC" id="2.7.11.33" evidence="1"/>
<dbReference type="EC" id="2.7.4.28" evidence="1"/>
<dbReference type="EMBL" id="CP001052">
    <property type="protein sequence ID" value="ACD16835.1"/>
    <property type="molecule type" value="Genomic_DNA"/>
</dbReference>
<dbReference type="RefSeq" id="WP_012433432.1">
    <property type="nucleotide sequence ID" value="NC_010681.1"/>
</dbReference>
<dbReference type="SMR" id="B2T5H8"/>
<dbReference type="STRING" id="398527.Bphyt_2439"/>
<dbReference type="KEGG" id="bpy:Bphyt_2439"/>
<dbReference type="eggNOG" id="COG1806">
    <property type="taxonomic scope" value="Bacteria"/>
</dbReference>
<dbReference type="HOGENOM" id="CLU_046206_1_0_4"/>
<dbReference type="OrthoDB" id="9782201at2"/>
<dbReference type="Proteomes" id="UP000001739">
    <property type="component" value="Chromosome 1"/>
</dbReference>
<dbReference type="GO" id="GO:0043531">
    <property type="term" value="F:ADP binding"/>
    <property type="evidence" value="ECO:0007669"/>
    <property type="project" value="UniProtKB-UniRule"/>
</dbReference>
<dbReference type="GO" id="GO:0005524">
    <property type="term" value="F:ATP binding"/>
    <property type="evidence" value="ECO:0007669"/>
    <property type="project" value="InterPro"/>
</dbReference>
<dbReference type="GO" id="GO:0016776">
    <property type="term" value="F:phosphotransferase activity, phosphate group as acceptor"/>
    <property type="evidence" value="ECO:0007669"/>
    <property type="project" value="UniProtKB-UniRule"/>
</dbReference>
<dbReference type="GO" id="GO:0004674">
    <property type="term" value="F:protein serine/threonine kinase activity"/>
    <property type="evidence" value="ECO:0007669"/>
    <property type="project" value="UniProtKB-UniRule"/>
</dbReference>
<dbReference type="HAMAP" id="MF_01062">
    <property type="entry name" value="PSRP"/>
    <property type="match status" value="1"/>
</dbReference>
<dbReference type="InterPro" id="IPR005177">
    <property type="entry name" value="Kinase-pyrophosphorylase"/>
</dbReference>
<dbReference type="InterPro" id="IPR026530">
    <property type="entry name" value="PSRP"/>
</dbReference>
<dbReference type="NCBIfam" id="NF003742">
    <property type="entry name" value="PRK05339.1"/>
    <property type="match status" value="1"/>
</dbReference>
<dbReference type="PANTHER" id="PTHR31756">
    <property type="entry name" value="PYRUVATE, PHOSPHATE DIKINASE REGULATORY PROTEIN 1, CHLOROPLASTIC"/>
    <property type="match status" value="1"/>
</dbReference>
<dbReference type="PANTHER" id="PTHR31756:SF3">
    <property type="entry name" value="PYRUVATE, PHOSPHATE DIKINASE REGULATORY PROTEIN 1, CHLOROPLASTIC"/>
    <property type="match status" value="1"/>
</dbReference>
<dbReference type="Pfam" id="PF03618">
    <property type="entry name" value="Kinase-PPPase"/>
    <property type="match status" value="1"/>
</dbReference>
<reference key="1">
    <citation type="journal article" date="2011" name="J. Bacteriol.">
        <title>Complete genome sequence of the plant growth-promoting endophyte Burkholderia phytofirmans strain PsJN.</title>
        <authorList>
            <person name="Weilharter A."/>
            <person name="Mitter B."/>
            <person name="Shin M.V."/>
            <person name="Chain P.S."/>
            <person name="Nowak J."/>
            <person name="Sessitsch A."/>
        </authorList>
    </citation>
    <scope>NUCLEOTIDE SEQUENCE [LARGE SCALE GENOMIC DNA]</scope>
    <source>
        <strain>DSM 17436 / LMG 22146 / PsJN</strain>
    </source>
</reference>
<protein>
    <recommendedName>
        <fullName evidence="1">Putative phosphoenolpyruvate synthase regulatory protein</fullName>
        <shortName evidence="1">PEP synthase regulatory protein</shortName>
        <shortName evidence="1">PSRP</shortName>
        <ecNumber evidence="1">2.7.11.33</ecNumber>
        <ecNumber evidence="1">2.7.4.28</ecNumber>
    </recommendedName>
    <alternativeName>
        <fullName evidence="1">Pyruvate, water dikinase regulatory protein</fullName>
    </alternativeName>
</protein>
<feature type="chain" id="PRO_1000136460" description="Putative phosphoenolpyruvate synthase regulatory protein">
    <location>
        <begin position="1"/>
        <end position="271"/>
    </location>
</feature>
<feature type="binding site" evidence="1">
    <location>
        <begin position="151"/>
        <end position="158"/>
    </location>
    <ligand>
        <name>ADP</name>
        <dbReference type="ChEBI" id="CHEBI:456216"/>
    </ligand>
</feature>
<gene>
    <name type="ordered locus">Bphyt_2439</name>
</gene>
<sequence>MPPTVFIVSDGTGITAETFAHSILSQFDQKFRLVRVPFVDSTEKAYATLEKINEAIVQDGRRPIVFTTLVDSASNQIVKGSNALVLDMFQTFVEPLEQELELKSSHAMGRGHQNADTEEYKNRIEAINFSLAHDDGQSNRNLADADVILVGVSRSGKTPTSLYLAMQYGVKAANYPLIPEDFERGKLPTPLLAHRQKMFGLSIDPQRLSEIRNERRPGSKYAAPENCRYEINEAEAMMRREGIKWLSSTHKSIEEIATTILQEIKLDRPSY</sequence>
<evidence type="ECO:0000255" key="1">
    <source>
        <dbReference type="HAMAP-Rule" id="MF_01062"/>
    </source>
</evidence>
<comment type="function">
    <text evidence="1">Bifunctional serine/threonine kinase and phosphorylase involved in the regulation of the phosphoenolpyruvate synthase (PEPS) by catalyzing its phosphorylation/dephosphorylation.</text>
</comment>
<comment type="catalytic activity">
    <reaction evidence="1">
        <text>[pyruvate, water dikinase] + ADP = [pyruvate, water dikinase]-phosphate + AMP + H(+)</text>
        <dbReference type="Rhea" id="RHEA:46020"/>
        <dbReference type="Rhea" id="RHEA-COMP:11425"/>
        <dbReference type="Rhea" id="RHEA-COMP:11426"/>
        <dbReference type="ChEBI" id="CHEBI:15378"/>
        <dbReference type="ChEBI" id="CHEBI:43176"/>
        <dbReference type="ChEBI" id="CHEBI:68546"/>
        <dbReference type="ChEBI" id="CHEBI:456215"/>
        <dbReference type="ChEBI" id="CHEBI:456216"/>
        <dbReference type="EC" id="2.7.11.33"/>
    </reaction>
</comment>
<comment type="catalytic activity">
    <reaction evidence="1">
        <text>[pyruvate, water dikinase]-phosphate + phosphate + H(+) = [pyruvate, water dikinase] + diphosphate</text>
        <dbReference type="Rhea" id="RHEA:48580"/>
        <dbReference type="Rhea" id="RHEA-COMP:11425"/>
        <dbReference type="Rhea" id="RHEA-COMP:11426"/>
        <dbReference type="ChEBI" id="CHEBI:15378"/>
        <dbReference type="ChEBI" id="CHEBI:33019"/>
        <dbReference type="ChEBI" id="CHEBI:43176"/>
        <dbReference type="ChEBI" id="CHEBI:43474"/>
        <dbReference type="ChEBI" id="CHEBI:68546"/>
        <dbReference type="EC" id="2.7.4.28"/>
    </reaction>
</comment>
<comment type="similarity">
    <text evidence="1">Belongs to the pyruvate, phosphate/water dikinase regulatory protein family. PSRP subfamily.</text>
</comment>
<organism>
    <name type="scientific">Paraburkholderia phytofirmans (strain DSM 17436 / LMG 22146 / PsJN)</name>
    <name type="common">Burkholderia phytofirmans</name>
    <dbReference type="NCBI Taxonomy" id="398527"/>
    <lineage>
        <taxon>Bacteria</taxon>
        <taxon>Pseudomonadati</taxon>
        <taxon>Pseudomonadota</taxon>
        <taxon>Betaproteobacteria</taxon>
        <taxon>Burkholderiales</taxon>
        <taxon>Burkholderiaceae</taxon>
        <taxon>Paraburkholderia</taxon>
    </lineage>
</organism>
<proteinExistence type="inferred from homology"/>
<accession>B2T5H8</accession>
<keyword id="KW-0418">Kinase</keyword>
<keyword id="KW-0547">Nucleotide-binding</keyword>
<keyword id="KW-0723">Serine/threonine-protein kinase</keyword>
<keyword id="KW-0808">Transferase</keyword>